<proteinExistence type="inferred from homology"/>
<evidence type="ECO:0000255" key="1">
    <source>
        <dbReference type="HAMAP-Rule" id="MF_01403"/>
    </source>
</evidence>
<keyword id="KW-0456">Lyase</keyword>
<keyword id="KW-1185">Reference proteome</keyword>
<keyword id="KW-0786">Thiamine pyrophosphate</keyword>
<gene>
    <name type="ordered locus">MCA1587</name>
</gene>
<name>PHK_METCA</name>
<reference key="1">
    <citation type="journal article" date="2004" name="PLoS Biol.">
        <title>Genomic insights into methanotrophy: the complete genome sequence of Methylococcus capsulatus (Bath).</title>
        <authorList>
            <person name="Ward N.L."/>
            <person name="Larsen O."/>
            <person name="Sakwa J."/>
            <person name="Bruseth L."/>
            <person name="Khouri H.M."/>
            <person name="Durkin A.S."/>
            <person name="Dimitrov G."/>
            <person name="Jiang L."/>
            <person name="Scanlan D."/>
            <person name="Kang K.H."/>
            <person name="Lewis M.R."/>
            <person name="Nelson K.E."/>
            <person name="Methe B.A."/>
            <person name="Wu M."/>
            <person name="Heidelberg J.F."/>
            <person name="Paulsen I.T."/>
            <person name="Fouts D.E."/>
            <person name="Ravel J."/>
            <person name="Tettelin H."/>
            <person name="Ren Q."/>
            <person name="Read T.D."/>
            <person name="DeBoy R.T."/>
            <person name="Seshadri R."/>
            <person name="Salzberg S.L."/>
            <person name="Jensen H.B."/>
            <person name="Birkeland N.K."/>
            <person name="Nelson W.C."/>
            <person name="Dodson R.J."/>
            <person name="Grindhaug S.H."/>
            <person name="Holt I.E."/>
            <person name="Eidhammer I."/>
            <person name="Jonasen I."/>
            <person name="Vanaken S."/>
            <person name="Utterback T.R."/>
            <person name="Feldblyum T.V."/>
            <person name="Fraser C.M."/>
            <person name="Lillehaug J.R."/>
            <person name="Eisen J.A."/>
        </authorList>
    </citation>
    <scope>NUCLEOTIDE SEQUENCE [LARGE SCALE GENOMIC DNA]</scope>
    <source>
        <strain>ATCC 33009 / NCIMB 11132 / Bath</strain>
    </source>
</reference>
<accession>Q608B0</accession>
<organism>
    <name type="scientific">Methylococcus capsulatus (strain ATCC 33009 / NCIMB 11132 / Bath)</name>
    <dbReference type="NCBI Taxonomy" id="243233"/>
    <lineage>
        <taxon>Bacteria</taxon>
        <taxon>Pseudomonadati</taxon>
        <taxon>Pseudomonadota</taxon>
        <taxon>Gammaproteobacteria</taxon>
        <taxon>Methylococcales</taxon>
        <taxon>Methylococcaceae</taxon>
        <taxon>Methylococcus</taxon>
    </lineage>
</organism>
<sequence length="811" mass="90976">MATQFPLSSEFERLTVYGPTRATVSGTPLDAEEVRKIHAFWRACNYLALGMIYLRGNPLLREPLKPEHIKHRLLGHWGSSPNLAFVYTHLNRAIRKHDLDMIFMAGPGHGAPGVLGPLYLEGSYSEIYPDKDLSEEGLLNFFKQFSFPGGIGSHCTPETPGSIHEGGELGYVLSHACGAAFDNPDLIVAAVVGDGEAETGPLATSWHINKFLNPIRDGAVLPILNLNGYKINNPTLLARISHEELENLLRGYGYTPYFVEGSEPESMHQAMAATVDRSIEDIRAAQTEARASGIARRPRWPMIVLRSPKGWTAPRQIDGHNVEGFWRAHQVPVADVAKNPEHLKLLEGWMRSYKPEELFDAEGCPVAEIREMAPAGLRRMGLNPHANGGHLKKALRIPNFRNYGIEVAKPGQIEAPNTQPLGVFLRDVMKENAHNFRLFGPDENTSNKLDAVYAAAKKFWIAEYFPEDQDGGELAPDGRVMEMLSEHTLEGMLEGYLLTGRHGFLSTYEAFVHVIDSMFNQHAKWLSICNQLSWRQDVASLNLLITSTVWRQDHNGFTHQDPGFLDVVVNKSADVTRIYLPPDVNSLLSVADHCLRSQNYINVIVSDKQLHLQFMDMDAAIAHCTEGLGIWEWASNDEGQEPDVVMACAGDIPTLEALAATALLREEFPELKIRFINVVDLFKLQPESEHPHGLSDKDFDSLFTRDKPVIFNFHGYPWLIHRLAYRRTNHANMHVRGYKEKGNINTPLELAINNQIDRFSLAIDVIDRIPEIAVSGAHAKARFRKQQIACRQYAYEHGVDMPEVAGWRWPG</sequence>
<comment type="cofactor">
    <cofactor evidence="1">
        <name>thiamine diphosphate</name>
        <dbReference type="ChEBI" id="CHEBI:58937"/>
    </cofactor>
</comment>
<comment type="similarity">
    <text evidence="1">Belongs to the XFP family.</text>
</comment>
<dbReference type="EC" id="4.1.2.-" evidence="1"/>
<dbReference type="EMBL" id="AE017282">
    <property type="protein sequence ID" value="AAU92125.1"/>
    <property type="molecule type" value="Genomic_DNA"/>
</dbReference>
<dbReference type="RefSeq" id="WP_010960853.1">
    <property type="nucleotide sequence ID" value="NC_002977.6"/>
</dbReference>
<dbReference type="SMR" id="Q608B0"/>
<dbReference type="STRING" id="243233.MCA1587"/>
<dbReference type="GeneID" id="88223851"/>
<dbReference type="KEGG" id="mca:MCA1587"/>
<dbReference type="eggNOG" id="COG3957">
    <property type="taxonomic scope" value="Bacteria"/>
</dbReference>
<dbReference type="HOGENOM" id="CLU_013954_2_0_6"/>
<dbReference type="Proteomes" id="UP000006821">
    <property type="component" value="Chromosome"/>
</dbReference>
<dbReference type="GO" id="GO:0016832">
    <property type="term" value="F:aldehyde-lyase activity"/>
    <property type="evidence" value="ECO:0007669"/>
    <property type="project" value="UniProtKB-UniRule"/>
</dbReference>
<dbReference type="GO" id="GO:0005975">
    <property type="term" value="P:carbohydrate metabolic process"/>
    <property type="evidence" value="ECO:0007669"/>
    <property type="project" value="InterPro"/>
</dbReference>
<dbReference type="CDD" id="cd02011">
    <property type="entry name" value="TPP_PK"/>
    <property type="match status" value="1"/>
</dbReference>
<dbReference type="FunFam" id="3.40.50.970:FF:000011">
    <property type="entry name" value="Pyruvate dehydrogenase E1 component"/>
    <property type="match status" value="1"/>
</dbReference>
<dbReference type="FunFam" id="3.40.50.920:FF:000029">
    <property type="entry name" value="Xylulose-5-phosphate/fructose-6-phosphate phosphoketolase"/>
    <property type="match status" value="1"/>
</dbReference>
<dbReference type="FunFam" id="3.40.50.970:FF:000091">
    <property type="entry name" value="Xylulose-5-phosphate/fructose-6-phosphate phosphoketolase"/>
    <property type="match status" value="1"/>
</dbReference>
<dbReference type="Gene3D" id="3.40.50.920">
    <property type="match status" value="1"/>
</dbReference>
<dbReference type="Gene3D" id="3.40.50.970">
    <property type="match status" value="2"/>
</dbReference>
<dbReference type="HAMAP" id="MF_01403">
    <property type="entry name" value="Phosphoketolase"/>
    <property type="match status" value="1"/>
</dbReference>
<dbReference type="InterPro" id="IPR023962">
    <property type="entry name" value="Phosphoketolase"/>
</dbReference>
<dbReference type="InterPro" id="IPR029061">
    <property type="entry name" value="THDP-binding"/>
</dbReference>
<dbReference type="InterPro" id="IPR009014">
    <property type="entry name" value="Transketo_C/PFOR_II"/>
</dbReference>
<dbReference type="InterPro" id="IPR005593">
    <property type="entry name" value="Xul5P/Fru6P_PKetolase"/>
</dbReference>
<dbReference type="InterPro" id="IPR018969">
    <property type="entry name" value="Xul5P/Fru6P_PKetolase_C"/>
</dbReference>
<dbReference type="InterPro" id="IPR019790">
    <property type="entry name" value="Xul5P/Fru6P_PKetolase_CS"/>
</dbReference>
<dbReference type="InterPro" id="IPR018970">
    <property type="entry name" value="Xul5P/Fru6P_PKetolase_N"/>
</dbReference>
<dbReference type="InterPro" id="IPR019789">
    <property type="entry name" value="Xul5P/Fru6P_PKetolase_ThDP_BS"/>
</dbReference>
<dbReference type="NCBIfam" id="NF003617">
    <property type="entry name" value="PRK05261.1-2"/>
    <property type="match status" value="1"/>
</dbReference>
<dbReference type="NCBIfam" id="NF003619">
    <property type="entry name" value="PRK05261.1-4"/>
    <property type="match status" value="1"/>
</dbReference>
<dbReference type="PANTHER" id="PTHR31273">
    <property type="entry name" value="PHOSPHOKETOLASE-RELATED"/>
    <property type="match status" value="1"/>
</dbReference>
<dbReference type="PANTHER" id="PTHR31273:SF0">
    <property type="entry name" value="PHOSPHOKETOLASE-RELATED"/>
    <property type="match status" value="1"/>
</dbReference>
<dbReference type="Pfam" id="PF03894">
    <property type="entry name" value="XFP"/>
    <property type="match status" value="1"/>
</dbReference>
<dbReference type="Pfam" id="PF09363">
    <property type="entry name" value="XFP_C"/>
    <property type="match status" value="1"/>
</dbReference>
<dbReference type="Pfam" id="PF09364">
    <property type="entry name" value="XFP_N"/>
    <property type="match status" value="1"/>
</dbReference>
<dbReference type="PIRSF" id="PIRSF017245">
    <property type="entry name" value="Phosphoketolase"/>
    <property type="match status" value="1"/>
</dbReference>
<dbReference type="SUPFAM" id="SSF52518">
    <property type="entry name" value="Thiamin diphosphate-binding fold (THDP-binding)"/>
    <property type="match status" value="2"/>
</dbReference>
<dbReference type="PROSITE" id="PS60002">
    <property type="entry name" value="PHOSPHOKETOLASE_1"/>
    <property type="match status" value="1"/>
</dbReference>
<dbReference type="PROSITE" id="PS60003">
    <property type="entry name" value="PHOSPHOKETOLASE_2"/>
    <property type="match status" value="1"/>
</dbReference>
<feature type="chain" id="PRO_0000193880" description="Probable phosphoketolase">
    <location>
        <begin position="1"/>
        <end position="811"/>
    </location>
</feature>
<protein>
    <recommendedName>
        <fullName evidence="1">Probable phosphoketolase</fullName>
        <ecNumber evidence="1">4.1.2.-</ecNumber>
    </recommendedName>
</protein>